<sequence>MKILVSGFDPFGGEKINPAIESVKLLPDSIKGNEIIKIEIPTVIGKSVDKLKEKIKEVKPDVVISVGQAGGREDITVERVAINVDDCRIKDNEGNQPIDEKIAEDGPDAYLLTLPIKAMVENIKSANIPASVSNTAGTFICNHVAYGMAHVRATEYPNMRTGFIHIPFLPEQVLNKPHTASMNLDTIAKALEKAIEAVIDNDEDIKVTGGKTH</sequence>
<organism>
    <name type="scientific">Finegoldia magna (strain ATCC 29328 / DSM 20472 / WAL 2508)</name>
    <name type="common">Peptostreptococcus magnus</name>
    <dbReference type="NCBI Taxonomy" id="334413"/>
    <lineage>
        <taxon>Bacteria</taxon>
        <taxon>Bacillati</taxon>
        <taxon>Bacillota</taxon>
        <taxon>Tissierellia</taxon>
        <taxon>Tissierellales</taxon>
        <taxon>Peptoniphilaceae</taxon>
        <taxon>Finegoldia</taxon>
    </lineage>
</organism>
<dbReference type="EC" id="3.4.19.3" evidence="1"/>
<dbReference type="EMBL" id="AP008971">
    <property type="protein sequence ID" value="BAG07772.1"/>
    <property type="molecule type" value="Genomic_DNA"/>
</dbReference>
<dbReference type="RefSeq" id="WP_012290353.1">
    <property type="nucleotide sequence ID" value="NC_010376.1"/>
</dbReference>
<dbReference type="SMR" id="B0S415"/>
<dbReference type="STRING" id="334413.FMG_0354"/>
<dbReference type="MEROPS" id="C15.001"/>
<dbReference type="KEGG" id="fma:FMG_0354"/>
<dbReference type="eggNOG" id="COG2039">
    <property type="taxonomic scope" value="Bacteria"/>
</dbReference>
<dbReference type="HOGENOM" id="CLU_043960_4_0_9"/>
<dbReference type="Proteomes" id="UP000001319">
    <property type="component" value="Chromosome"/>
</dbReference>
<dbReference type="GO" id="GO:0005829">
    <property type="term" value="C:cytosol"/>
    <property type="evidence" value="ECO:0007669"/>
    <property type="project" value="InterPro"/>
</dbReference>
<dbReference type="GO" id="GO:0016920">
    <property type="term" value="F:pyroglutamyl-peptidase activity"/>
    <property type="evidence" value="ECO:0007669"/>
    <property type="project" value="UniProtKB-UniRule"/>
</dbReference>
<dbReference type="GO" id="GO:0006508">
    <property type="term" value="P:proteolysis"/>
    <property type="evidence" value="ECO:0007669"/>
    <property type="project" value="UniProtKB-KW"/>
</dbReference>
<dbReference type="CDD" id="cd00501">
    <property type="entry name" value="Peptidase_C15"/>
    <property type="match status" value="1"/>
</dbReference>
<dbReference type="FunFam" id="3.40.630.20:FF:000001">
    <property type="entry name" value="Pyrrolidone-carboxylate peptidase"/>
    <property type="match status" value="1"/>
</dbReference>
<dbReference type="Gene3D" id="3.40.630.20">
    <property type="entry name" value="Peptidase C15, pyroglutamyl peptidase I-like"/>
    <property type="match status" value="1"/>
</dbReference>
<dbReference type="HAMAP" id="MF_00417">
    <property type="entry name" value="Pyrrolid_peptidase"/>
    <property type="match status" value="1"/>
</dbReference>
<dbReference type="InterPro" id="IPR000816">
    <property type="entry name" value="Peptidase_C15"/>
</dbReference>
<dbReference type="InterPro" id="IPR016125">
    <property type="entry name" value="Peptidase_C15-like"/>
</dbReference>
<dbReference type="InterPro" id="IPR036440">
    <property type="entry name" value="Peptidase_C15-like_sf"/>
</dbReference>
<dbReference type="InterPro" id="IPR029762">
    <property type="entry name" value="PGP-I_bact-type"/>
</dbReference>
<dbReference type="InterPro" id="IPR033694">
    <property type="entry name" value="PGPEP1_Cys_AS"/>
</dbReference>
<dbReference type="InterPro" id="IPR033693">
    <property type="entry name" value="PGPEP1_Glu_AS"/>
</dbReference>
<dbReference type="NCBIfam" id="NF009676">
    <property type="entry name" value="PRK13197.1"/>
    <property type="match status" value="1"/>
</dbReference>
<dbReference type="NCBIfam" id="TIGR00504">
    <property type="entry name" value="pyro_pdase"/>
    <property type="match status" value="1"/>
</dbReference>
<dbReference type="PANTHER" id="PTHR23402">
    <property type="entry name" value="PROTEASE FAMILY C15 PYROGLUTAMYL-PEPTIDASE I-RELATED"/>
    <property type="match status" value="1"/>
</dbReference>
<dbReference type="PANTHER" id="PTHR23402:SF1">
    <property type="entry name" value="PYROGLUTAMYL-PEPTIDASE I"/>
    <property type="match status" value="1"/>
</dbReference>
<dbReference type="Pfam" id="PF01470">
    <property type="entry name" value="Peptidase_C15"/>
    <property type="match status" value="1"/>
</dbReference>
<dbReference type="PIRSF" id="PIRSF015592">
    <property type="entry name" value="Prld-crbxl_pptds"/>
    <property type="match status" value="1"/>
</dbReference>
<dbReference type="PRINTS" id="PR00706">
    <property type="entry name" value="PYROGLUPTASE"/>
</dbReference>
<dbReference type="SUPFAM" id="SSF53182">
    <property type="entry name" value="Pyrrolidone carboxyl peptidase (pyroglutamate aminopeptidase)"/>
    <property type="match status" value="1"/>
</dbReference>
<dbReference type="PROSITE" id="PS01334">
    <property type="entry name" value="PYRASE_CYS"/>
    <property type="match status" value="1"/>
</dbReference>
<dbReference type="PROSITE" id="PS01333">
    <property type="entry name" value="PYRASE_GLU"/>
    <property type="match status" value="1"/>
</dbReference>
<protein>
    <recommendedName>
        <fullName evidence="1">Pyrrolidone-carboxylate peptidase</fullName>
        <ecNumber evidence="1">3.4.19.3</ecNumber>
    </recommendedName>
    <alternativeName>
        <fullName evidence="1">5-oxoprolyl-peptidase</fullName>
    </alternativeName>
    <alternativeName>
        <fullName evidence="1">Pyroglutamyl-peptidase I</fullName>
        <shortName evidence="1">PGP-I</shortName>
        <shortName evidence="1">Pyrase</shortName>
    </alternativeName>
</protein>
<gene>
    <name evidence="1" type="primary">pcp</name>
    <name type="ordered locus">FMG_0354</name>
</gene>
<accession>B0S415</accession>
<feature type="chain" id="PRO_1000123997" description="Pyrrolidone-carboxylate peptidase">
    <location>
        <begin position="1"/>
        <end position="213"/>
    </location>
</feature>
<feature type="active site" evidence="1">
    <location>
        <position position="78"/>
    </location>
</feature>
<feature type="active site" evidence="1">
    <location>
        <position position="141"/>
    </location>
</feature>
<feature type="active site" evidence="1">
    <location>
        <position position="165"/>
    </location>
</feature>
<reference key="1">
    <citation type="journal article" date="2008" name="DNA Res.">
        <title>Complete genome sequence of Finegoldia magna, an anaerobic opportunistic pathogen.</title>
        <authorList>
            <person name="Goto T."/>
            <person name="Yamashita A."/>
            <person name="Hirakawa H."/>
            <person name="Matsutani M."/>
            <person name="Todo K."/>
            <person name="Ohshima K."/>
            <person name="Toh H."/>
            <person name="Miyamoto K."/>
            <person name="Kuhara S."/>
            <person name="Hattori M."/>
            <person name="Shimizu T."/>
            <person name="Akimoto S."/>
        </authorList>
    </citation>
    <scope>NUCLEOTIDE SEQUENCE [LARGE SCALE GENOMIC DNA]</scope>
    <source>
        <strain>ATCC 29328 / DSM 20472 / WAL 2508</strain>
    </source>
</reference>
<comment type="function">
    <text evidence="1">Removes 5-oxoproline from various penultimate amino acid residues except L-proline.</text>
</comment>
<comment type="catalytic activity">
    <reaction evidence="1">
        <text>Release of an N-terminal pyroglutamyl group from a polypeptide, the second amino acid generally not being Pro.</text>
        <dbReference type="EC" id="3.4.19.3"/>
    </reaction>
</comment>
<comment type="subunit">
    <text evidence="1">Homotetramer.</text>
</comment>
<comment type="subcellular location">
    <subcellularLocation>
        <location evidence="1">Cytoplasm</location>
    </subcellularLocation>
</comment>
<comment type="similarity">
    <text evidence="1">Belongs to the peptidase C15 family.</text>
</comment>
<keyword id="KW-0963">Cytoplasm</keyword>
<keyword id="KW-0378">Hydrolase</keyword>
<keyword id="KW-0645">Protease</keyword>
<keyword id="KW-1185">Reference proteome</keyword>
<keyword id="KW-0788">Thiol protease</keyword>
<name>PCP_FINM2</name>
<evidence type="ECO:0000255" key="1">
    <source>
        <dbReference type="HAMAP-Rule" id="MF_00417"/>
    </source>
</evidence>
<proteinExistence type="inferred from homology"/>